<evidence type="ECO:0000255" key="1">
    <source>
        <dbReference type="HAMAP-Rule" id="MF_01382"/>
    </source>
</evidence>
<evidence type="ECO:0000256" key="2">
    <source>
        <dbReference type="SAM" id="MobiDB-lite"/>
    </source>
</evidence>
<proteinExistence type="inferred from homology"/>
<organism>
    <name type="scientific">Clostridium perfringens (strain ATCC 13124 / DSM 756 / JCM 1290 / NCIMB 6125 / NCTC 8237 / Type A)</name>
    <dbReference type="NCBI Taxonomy" id="195103"/>
    <lineage>
        <taxon>Bacteria</taxon>
        <taxon>Bacillati</taxon>
        <taxon>Bacillota</taxon>
        <taxon>Clostridia</taxon>
        <taxon>Eubacteriales</taxon>
        <taxon>Clostridiaceae</taxon>
        <taxon>Clostridium</taxon>
    </lineage>
</organism>
<gene>
    <name evidence="1" type="primary">secA</name>
    <name type="ordered locus">CPF_2429</name>
</gene>
<feature type="chain" id="PRO_0000320783" description="Protein translocase subunit SecA">
    <location>
        <begin position="1"/>
        <end position="840"/>
    </location>
</feature>
<feature type="region of interest" description="Disordered" evidence="2">
    <location>
        <begin position="787"/>
        <end position="822"/>
    </location>
</feature>
<feature type="compositionally biased region" description="Basic and acidic residues" evidence="2">
    <location>
        <begin position="802"/>
        <end position="819"/>
    </location>
</feature>
<feature type="binding site" evidence="1">
    <location>
        <position position="85"/>
    </location>
    <ligand>
        <name>ATP</name>
        <dbReference type="ChEBI" id="CHEBI:30616"/>
    </ligand>
</feature>
<feature type="binding site" evidence="1">
    <location>
        <begin position="103"/>
        <end position="107"/>
    </location>
    <ligand>
        <name>ATP</name>
        <dbReference type="ChEBI" id="CHEBI:30616"/>
    </ligand>
</feature>
<feature type="binding site" evidence="1">
    <location>
        <position position="492"/>
    </location>
    <ligand>
        <name>ATP</name>
        <dbReference type="ChEBI" id="CHEBI:30616"/>
    </ligand>
</feature>
<feature type="binding site" evidence="1">
    <location>
        <position position="823"/>
    </location>
    <ligand>
        <name>Zn(2+)</name>
        <dbReference type="ChEBI" id="CHEBI:29105"/>
    </ligand>
</feature>
<feature type="binding site" evidence="1">
    <location>
        <position position="825"/>
    </location>
    <ligand>
        <name>Zn(2+)</name>
        <dbReference type="ChEBI" id="CHEBI:29105"/>
    </ligand>
</feature>
<feature type="binding site" evidence="1">
    <location>
        <position position="834"/>
    </location>
    <ligand>
        <name>Zn(2+)</name>
        <dbReference type="ChEBI" id="CHEBI:29105"/>
    </ligand>
</feature>
<feature type="binding site" evidence="1">
    <location>
        <position position="835"/>
    </location>
    <ligand>
        <name>Zn(2+)</name>
        <dbReference type="ChEBI" id="CHEBI:29105"/>
    </ligand>
</feature>
<protein>
    <recommendedName>
        <fullName evidence="1">Protein translocase subunit SecA</fullName>
        <ecNumber evidence="1">7.4.2.8</ecNumber>
    </recommendedName>
</protein>
<sequence>MGLFDKIFGSYSDREVKRITPIVDKIDSLGPEMEKLSDEELKQKTFEFKDRYAKGESLDDMLPEAFAVCREASTRVLGMKHYREQLIGGTVLHQGRIAEMKTGEGKTLVATLPVYLNAIAGKGVHVITVNDYLATRDKEWMGQLYEFLGLTTGVIVHGLTNDQRREAYNADITYGTNNEFGFDYLRDNMVIYKEERVQRPLHYCIVDEVDSILIDEARTPLIISGAGSKSTDLYKIADFFVKKLREEEDYTIDEKAHAAMLTDKGVAEAEKAFGIENYADANNMELQHHITQALKANYVMKRDKDYMVKDDEIAIVDEFTGRLMEGRRYSDGLHQAIEAKEGVKVQRESKTLATITFQNYFRMYTKLAGMTGTALTEETEFREIYGLDVVVIPTHRPVQREDHSDLVFKTAKGKYDAIVEEIIETHKTGQPVLVGTTSIEKSEYLSSLLKKKGVPHKVLNARYHEQEAEIVSHAGELGNITIATNMAGRGTDIKLGEGVLEVGGLKIIGTERHESRRIDNQLRGRSGRQGDKGHSRFYISLEDDLMRIFGSEKLQSVVDRLGLEETEAIESKMVTKSIENAQKKVEGNNFDIRKTLLGYDDVMNKQREVIYKQRSQVLEGENLEDSVQAMIEDVVTSAVQAHLGNIDEDDFEKELGDLIKYLEDIMLPHGKFTVEELKTSSNEEITRKFIECAREIYKEKEEFVGSEQMREIERVIILRVVDTKWMDHIDDMDHLKQGIGLRAYKQQDPTQAYQMEGSAMFDEMINNIKIDTVRYLFHVKVEAEKPQRERVAKETGASHGGDSQEVKKKPVKKEPKVGRNDLCPCGSGKKYKSCCGREVV</sequence>
<keyword id="KW-0067">ATP-binding</keyword>
<keyword id="KW-1003">Cell membrane</keyword>
<keyword id="KW-0963">Cytoplasm</keyword>
<keyword id="KW-0472">Membrane</keyword>
<keyword id="KW-0479">Metal-binding</keyword>
<keyword id="KW-0547">Nucleotide-binding</keyword>
<keyword id="KW-0653">Protein transport</keyword>
<keyword id="KW-1278">Translocase</keyword>
<keyword id="KW-0811">Translocation</keyword>
<keyword id="KW-0813">Transport</keyword>
<keyword id="KW-0862">Zinc</keyword>
<reference key="1">
    <citation type="journal article" date="2006" name="Genome Res.">
        <title>Skewed genomic variability in strains of the toxigenic bacterial pathogen, Clostridium perfringens.</title>
        <authorList>
            <person name="Myers G.S.A."/>
            <person name="Rasko D.A."/>
            <person name="Cheung J.K."/>
            <person name="Ravel J."/>
            <person name="Seshadri R."/>
            <person name="DeBoy R.T."/>
            <person name="Ren Q."/>
            <person name="Varga J."/>
            <person name="Awad M.M."/>
            <person name="Brinkac L.M."/>
            <person name="Daugherty S.C."/>
            <person name="Haft D.H."/>
            <person name="Dodson R.J."/>
            <person name="Madupu R."/>
            <person name="Nelson W.C."/>
            <person name="Rosovitz M.J."/>
            <person name="Sullivan S.A."/>
            <person name="Khouri H."/>
            <person name="Dimitrov G.I."/>
            <person name="Watkins K.L."/>
            <person name="Mulligan S."/>
            <person name="Benton J."/>
            <person name="Radune D."/>
            <person name="Fisher D.J."/>
            <person name="Atkins H.S."/>
            <person name="Hiscox T."/>
            <person name="Jost B.H."/>
            <person name="Billington S.J."/>
            <person name="Songer J.G."/>
            <person name="McClane B.A."/>
            <person name="Titball R.W."/>
            <person name="Rood J.I."/>
            <person name="Melville S.B."/>
            <person name="Paulsen I.T."/>
        </authorList>
    </citation>
    <scope>NUCLEOTIDE SEQUENCE [LARGE SCALE GENOMIC DNA]</scope>
    <source>
        <strain>ATCC 13124 / DSM 756 / JCM 1290 / NCIMB 6125 / NCTC 8237 / S 107 / Type A</strain>
    </source>
</reference>
<accession>Q0TNE0</accession>
<dbReference type="EC" id="7.4.2.8" evidence="1"/>
<dbReference type="EMBL" id="CP000246">
    <property type="protein sequence ID" value="ABG82864.1"/>
    <property type="molecule type" value="Genomic_DNA"/>
</dbReference>
<dbReference type="RefSeq" id="WP_003457334.1">
    <property type="nucleotide sequence ID" value="NC_008261.1"/>
</dbReference>
<dbReference type="SMR" id="Q0TNE0"/>
<dbReference type="STRING" id="195103.CPF_2429"/>
<dbReference type="PaxDb" id="195103-CPF_2429"/>
<dbReference type="KEGG" id="cpf:CPF_2429"/>
<dbReference type="eggNOG" id="COG0653">
    <property type="taxonomic scope" value="Bacteria"/>
</dbReference>
<dbReference type="HOGENOM" id="CLU_005314_3_0_9"/>
<dbReference type="Proteomes" id="UP000001823">
    <property type="component" value="Chromosome"/>
</dbReference>
<dbReference type="GO" id="GO:0031522">
    <property type="term" value="C:cell envelope Sec protein transport complex"/>
    <property type="evidence" value="ECO:0007669"/>
    <property type="project" value="TreeGrafter"/>
</dbReference>
<dbReference type="GO" id="GO:0005829">
    <property type="term" value="C:cytosol"/>
    <property type="evidence" value="ECO:0007669"/>
    <property type="project" value="TreeGrafter"/>
</dbReference>
<dbReference type="GO" id="GO:0005886">
    <property type="term" value="C:plasma membrane"/>
    <property type="evidence" value="ECO:0007669"/>
    <property type="project" value="UniProtKB-SubCell"/>
</dbReference>
<dbReference type="GO" id="GO:0005524">
    <property type="term" value="F:ATP binding"/>
    <property type="evidence" value="ECO:0007669"/>
    <property type="project" value="UniProtKB-UniRule"/>
</dbReference>
<dbReference type="GO" id="GO:0046872">
    <property type="term" value="F:metal ion binding"/>
    <property type="evidence" value="ECO:0007669"/>
    <property type="project" value="UniProtKB-KW"/>
</dbReference>
<dbReference type="GO" id="GO:0008564">
    <property type="term" value="F:protein-exporting ATPase activity"/>
    <property type="evidence" value="ECO:0007669"/>
    <property type="project" value="UniProtKB-EC"/>
</dbReference>
<dbReference type="GO" id="GO:0065002">
    <property type="term" value="P:intracellular protein transmembrane transport"/>
    <property type="evidence" value="ECO:0007669"/>
    <property type="project" value="UniProtKB-UniRule"/>
</dbReference>
<dbReference type="GO" id="GO:0017038">
    <property type="term" value="P:protein import"/>
    <property type="evidence" value="ECO:0007669"/>
    <property type="project" value="InterPro"/>
</dbReference>
<dbReference type="GO" id="GO:0006605">
    <property type="term" value="P:protein targeting"/>
    <property type="evidence" value="ECO:0007669"/>
    <property type="project" value="UniProtKB-UniRule"/>
</dbReference>
<dbReference type="GO" id="GO:0043952">
    <property type="term" value="P:protein transport by the Sec complex"/>
    <property type="evidence" value="ECO:0007669"/>
    <property type="project" value="TreeGrafter"/>
</dbReference>
<dbReference type="CDD" id="cd17928">
    <property type="entry name" value="DEXDc_SecA"/>
    <property type="match status" value="1"/>
</dbReference>
<dbReference type="CDD" id="cd18803">
    <property type="entry name" value="SF2_C_secA"/>
    <property type="match status" value="1"/>
</dbReference>
<dbReference type="FunFam" id="1.10.3060.10:FF:000002">
    <property type="entry name" value="Preprotein translocase subunit SecA"/>
    <property type="match status" value="1"/>
</dbReference>
<dbReference type="FunFam" id="3.40.50.300:FF:000694">
    <property type="entry name" value="Preprotein translocase subunit SecA"/>
    <property type="match status" value="1"/>
</dbReference>
<dbReference type="FunFam" id="3.90.1440.10:FF:000001">
    <property type="entry name" value="Preprotein translocase subunit SecA"/>
    <property type="match status" value="1"/>
</dbReference>
<dbReference type="FunFam" id="3.40.50.300:FF:000334">
    <property type="entry name" value="Protein translocase subunit SecA"/>
    <property type="match status" value="1"/>
</dbReference>
<dbReference type="Gene3D" id="1.10.3060.10">
    <property type="entry name" value="Helical scaffold and wing domains of SecA"/>
    <property type="match status" value="1"/>
</dbReference>
<dbReference type="Gene3D" id="3.40.50.300">
    <property type="entry name" value="P-loop containing nucleotide triphosphate hydrolases"/>
    <property type="match status" value="3"/>
</dbReference>
<dbReference type="Gene3D" id="3.90.1440.10">
    <property type="entry name" value="SecA, preprotein cross-linking domain"/>
    <property type="match status" value="1"/>
</dbReference>
<dbReference type="HAMAP" id="MF_01382">
    <property type="entry name" value="SecA"/>
    <property type="match status" value="1"/>
</dbReference>
<dbReference type="InterPro" id="IPR014001">
    <property type="entry name" value="Helicase_ATP-bd"/>
</dbReference>
<dbReference type="InterPro" id="IPR001650">
    <property type="entry name" value="Helicase_C-like"/>
</dbReference>
<dbReference type="InterPro" id="IPR027417">
    <property type="entry name" value="P-loop_NTPase"/>
</dbReference>
<dbReference type="InterPro" id="IPR004027">
    <property type="entry name" value="SEC_C_motif"/>
</dbReference>
<dbReference type="InterPro" id="IPR000185">
    <property type="entry name" value="SecA"/>
</dbReference>
<dbReference type="InterPro" id="IPR020937">
    <property type="entry name" value="SecA_CS"/>
</dbReference>
<dbReference type="InterPro" id="IPR011115">
    <property type="entry name" value="SecA_DEAD"/>
</dbReference>
<dbReference type="InterPro" id="IPR014018">
    <property type="entry name" value="SecA_motor_DEAD"/>
</dbReference>
<dbReference type="InterPro" id="IPR011130">
    <property type="entry name" value="SecA_preprotein_X-link_dom"/>
</dbReference>
<dbReference type="InterPro" id="IPR044722">
    <property type="entry name" value="SecA_SF2_C"/>
</dbReference>
<dbReference type="InterPro" id="IPR011116">
    <property type="entry name" value="SecA_Wing/Scaffold"/>
</dbReference>
<dbReference type="InterPro" id="IPR036266">
    <property type="entry name" value="SecA_Wing/Scaffold_sf"/>
</dbReference>
<dbReference type="InterPro" id="IPR036670">
    <property type="entry name" value="SecA_X-link_sf"/>
</dbReference>
<dbReference type="NCBIfam" id="NF006630">
    <property type="entry name" value="PRK09200.1"/>
    <property type="match status" value="1"/>
</dbReference>
<dbReference type="NCBIfam" id="NF009538">
    <property type="entry name" value="PRK12904.1"/>
    <property type="match status" value="1"/>
</dbReference>
<dbReference type="NCBIfam" id="TIGR00963">
    <property type="entry name" value="secA"/>
    <property type="match status" value="1"/>
</dbReference>
<dbReference type="PANTHER" id="PTHR30612:SF0">
    <property type="entry name" value="CHLOROPLAST PROTEIN-TRANSPORTING ATPASE"/>
    <property type="match status" value="1"/>
</dbReference>
<dbReference type="PANTHER" id="PTHR30612">
    <property type="entry name" value="SECA INNER MEMBRANE COMPONENT OF SEC PROTEIN SECRETION SYSTEM"/>
    <property type="match status" value="1"/>
</dbReference>
<dbReference type="Pfam" id="PF21090">
    <property type="entry name" value="P-loop_SecA"/>
    <property type="match status" value="1"/>
</dbReference>
<dbReference type="Pfam" id="PF02810">
    <property type="entry name" value="SEC-C"/>
    <property type="match status" value="1"/>
</dbReference>
<dbReference type="Pfam" id="PF07517">
    <property type="entry name" value="SecA_DEAD"/>
    <property type="match status" value="1"/>
</dbReference>
<dbReference type="Pfam" id="PF01043">
    <property type="entry name" value="SecA_PP_bind"/>
    <property type="match status" value="1"/>
</dbReference>
<dbReference type="Pfam" id="PF07516">
    <property type="entry name" value="SecA_SW"/>
    <property type="match status" value="1"/>
</dbReference>
<dbReference type="PRINTS" id="PR00906">
    <property type="entry name" value="SECA"/>
</dbReference>
<dbReference type="SMART" id="SM00957">
    <property type="entry name" value="SecA_DEAD"/>
    <property type="match status" value="1"/>
</dbReference>
<dbReference type="SMART" id="SM00958">
    <property type="entry name" value="SecA_PP_bind"/>
    <property type="match status" value="1"/>
</dbReference>
<dbReference type="SUPFAM" id="SSF81886">
    <property type="entry name" value="Helical scaffold and wing domains of SecA"/>
    <property type="match status" value="1"/>
</dbReference>
<dbReference type="SUPFAM" id="SSF52540">
    <property type="entry name" value="P-loop containing nucleoside triphosphate hydrolases"/>
    <property type="match status" value="2"/>
</dbReference>
<dbReference type="SUPFAM" id="SSF81767">
    <property type="entry name" value="Pre-protein crosslinking domain of SecA"/>
    <property type="match status" value="1"/>
</dbReference>
<dbReference type="PROSITE" id="PS01312">
    <property type="entry name" value="SECA"/>
    <property type="match status" value="1"/>
</dbReference>
<dbReference type="PROSITE" id="PS51196">
    <property type="entry name" value="SECA_MOTOR_DEAD"/>
    <property type="match status" value="1"/>
</dbReference>
<comment type="function">
    <text evidence="1">Part of the Sec protein translocase complex. Interacts with the SecYEG preprotein conducting channel. Has a central role in coupling the hydrolysis of ATP to the transfer of proteins into and across the cell membrane, serving as an ATP-driven molecular motor driving the stepwise translocation of polypeptide chains across the membrane.</text>
</comment>
<comment type="catalytic activity">
    <reaction evidence="1">
        <text>ATP + H2O + cellular proteinSide 1 = ADP + phosphate + cellular proteinSide 2.</text>
        <dbReference type="EC" id="7.4.2.8"/>
    </reaction>
</comment>
<comment type="cofactor">
    <cofactor evidence="1">
        <name>Zn(2+)</name>
        <dbReference type="ChEBI" id="CHEBI:29105"/>
    </cofactor>
    <text evidence="1">May bind 1 zinc ion per subunit.</text>
</comment>
<comment type="subunit">
    <text evidence="1">Monomer and homodimer. Part of the essential Sec protein translocation apparatus which comprises SecA, SecYEG and auxiliary proteins SecDF. Other proteins may also be involved.</text>
</comment>
<comment type="subcellular location">
    <subcellularLocation>
        <location evidence="1">Cell membrane</location>
        <topology evidence="1">Peripheral membrane protein</topology>
        <orientation evidence="1">Cytoplasmic side</orientation>
    </subcellularLocation>
    <subcellularLocation>
        <location evidence="1">Cytoplasm</location>
    </subcellularLocation>
    <text evidence="1">Distribution is 50-50.</text>
</comment>
<comment type="similarity">
    <text evidence="1">Belongs to the SecA family.</text>
</comment>
<name>SECA_CLOP1</name>